<proteinExistence type="inferred from homology"/>
<feature type="chain" id="PRO_1000098471" description="1-deoxy-D-xylulose 5-phosphate reductoisomerase">
    <location>
        <begin position="1"/>
        <end position="396"/>
    </location>
</feature>
<feature type="binding site" evidence="1">
    <location>
        <position position="10"/>
    </location>
    <ligand>
        <name>NADPH</name>
        <dbReference type="ChEBI" id="CHEBI:57783"/>
    </ligand>
</feature>
<feature type="binding site" evidence="1">
    <location>
        <position position="11"/>
    </location>
    <ligand>
        <name>NADPH</name>
        <dbReference type="ChEBI" id="CHEBI:57783"/>
    </ligand>
</feature>
<feature type="binding site" evidence="1">
    <location>
        <position position="12"/>
    </location>
    <ligand>
        <name>NADPH</name>
        <dbReference type="ChEBI" id="CHEBI:57783"/>
    </ligand>
</feature>
<feature type="binding site" evidence="1">
    <location>
        <position position="13"/>
    </location>
    <ligand>
        <name>NADPH</name>
        <dbReference type="ChEBI" id="CHEBI:57783"/>
    </ligand>
</feature>
<feature type="binding site" evidence="1">
    <location>
        <position position="36"/>
    </location>
    <ligand>
        <name>NADPH</name>
        <dbReference type="ChEBI" id="CHEBI:57783"/>
    </ligand>
</feature>
<feature type="binding site" evidence="1">
    <location>
        <position position="37"/>
    </location>
    <ligand>
        <name>NADPH</name>
        <dbReference type="ChEBI" id="CHEBI:57783"/>
    </ligand>
</feature>
<feature type="binding site" evidence="1">
    <location>
        <position position="38"/>
    </location>
    <ligand>
        <name>NADPH</name>
        <dbReference type="ChEBI" id="CHEBI:57783"/>
    </ligand>
</feature>
<feature type="binding site" evidence="1">
    <location>
        <position position="124"/>
    </location>
    <ligand>
        <name>NADPH</name>
        <dbReference type="ChEBI" id="CHEBI:57783"/>
    </ligand>
</feature>
<feature type="binding site" evidence="1">
    <location>
        <position position="125"/>
    </location>
    <ligand>
        <name>1-deoxy-D-xylulose 5-phosphate</name>
        <dbReference type="ChEBI" id="CHEBI:57792"/>
    </ligand>
</feature>
<feature type="binding site" evidence="1">
    <location>
        <position position="126"/>
    </location>
    <ligand>
        <name>NADPH</name>
        <dbReference type="ChEBI" id="CHEBI:57783"/>
    </ligand>
</feature>
<feature type="binding site" evidence="1">
    <location>
        <position position="150"/>
    </location>
    <ligand>
        <name>Mn(2+)</name>
        <dbReference type="ChEBI" id="CHEBI:29035"/>
    </ligand>
</feature>
<feature type="binding site" evidence="1">
    <location>
        <position position="151"/>
    </location>
    <ligand>
        <name>1-deoxy-D-xylulose 5-phosphate</name>
        <dbReference type="ChEBI" id="CHEBI:57792"/>
    </ligand>
</feature>
<feature type="binding site" evidence="1">
    <location>
        <position position="152"/>
    </location>
    <ligand>
        <name>1-deoxy-D-xylulose 5-phosphate</name>
        <dbReference type="ChEBI" id="CHEBI:57792"/>
    </ligand>
</feature>
<feature type="binding site" evidence="1">
    <location>
        <position position="152"/>
    </location>
    <ligand>
        <name>Mn(2+)</name>
        <dbReference type="ChEBI" id="CHEBI:29035"/>
    </ligand>
</feature>
<feature type="binding site" evidence="1">
    <location>
        <position position="186"/>
    </location>
    <ligand>
        <name>1-deoxy-D-xylulose 5-phosphate</name>
        <dbReference type="ChEBI" id="CHEBI:57792"/>
    </ligand>
</feature>
<feature type="binding site" evidence="1">
    <location>
        <position position="209"/>
    </location>
    <ligand>
        <name>1-deoxy-D-xylulose 5-phosphate</name>
        <dbReference type="ChEBI" id="CHEBI:57792"/>
    </ligand>
</feature>
<feature type="binding site" evidence="1">
    <location>
        <position position="215"/>
    </location>
    <ligand>
        <name>NADPH</name>
        <dbReference type="ChEBI" id="CHEBI:57783"/>
    </ligand>
</feature>
<feature type="binding site" evidence="1">
    <location>
        <position position="222"/>
    </location>
    <ligand>
        <name>1-deoxy-D-xylulose 5-phosphate</name>
        <dbReference type="ChEBI" id="CHEBI:57792"/>
    </ligand>
</feature>
<feature type="binding site" evidence="1">
    <location>
        <position position="227"/>
    </location>
    <ligand>
        <name>1-deoxy-D-xylulose 5-phosphate</name>
        <dbReference type="ChEBI" id="CHEBI:57792"/>
    </ligand>
</feature>
<feature type="binding site" evidence="1">
    <location>
        <position position="228"/>
    </location>
    <ligand>
        <name>1-deoxy-D-xylulose 5-phosphate</name>
        <dbReference type="ChEBI" id="CHEBI:57792"/>
    </ligand>
</feature>
<feature type="binding site" evidence="1">
    <location>
        <position position="231"/>
    </location>
    <ligand>
        <name>1-deoxy-D-xylulose 5-phosphate</name>
        <dbReference type="ChEBI" id="CHEBI:57792"/>
    </ligand>
</feature>
<feature type="binding site" evidence="1">
    <location>
        <position position="231"/>
    </location>
    <ligand>
        <name>Mn(2+)</name>
        <dbReference type="ChEBI" id="CHEBI:29035"/>
    </ligand>
</feature>
<gene>
    <name evidence="1" type="primary">dxr</name>
    <name type="ordered locus">APJL_0428</name>
</gene>
<name>DXR_ACTPJ</name>
<keyword id="KW-0414">Isoprene biosynthesis</keyword>
<keyword id="KW-0464">Manganese</keyword>
<keyword id="KW-0479">Metal-binding</keyword>
<keyword id="KW-0521">NADP</keyword>
<keyword id="KW-0560">Oxidoreductase</keyword>
<accession>B0BTR0</accession>
<evidence type="ECO:0000255" key="1">
    <source>
        <dbReference type="HAMAP-Rule" id="MF_00183"/>
    </source>
</evidence>
<protein>
    <recommendedName>
        <fullName evidence="1">1-deoxy-D-xylulose 5-phosphate reductoisomerase</fullName>
        <shortName evidence="1">DXP reductoisomerase</shortName>
        <ecNumber evidence="1">1.1.1.267</ecNumber>
    </recommendedName>
    <alternativeName>
        <fullName evidence="1">1-deoxyxylulose-5-phosphate reductoisomerase</fullName>
    </alternativeName>
    <alternativeName>
        <fullName evidence="1">2-C-methyl-D-erythritol 4-phosphate synthase</fullName>
    </alternativeName>
</protein>
<organism>
    <name type="scientific">Actinobacillus pleuropneumoniae serotype 3 (strain JL03)</name>
    <dbReference type="NCBI Taxonomy" id="434271"/>
    <lineage>
        <taxon>Bacteria</taxon>
        <taxon>Pseudomonadati</taxon>
        <taxon>Pseudomonadota</taxon>
        <taxon>Gammaproteobacteria</taxon>
        <taxon>Pasteurellales</taxon>
        <taxon>Pasteurellaceae</taxon>
        <taxon>Actinobacillus</taxon>
    </lineage>
</organism>
<reference key="1">
    <citation type="journal article" date="2008" name="PLoS ONE">
        <title>Genome biology of Actinobacillus pleuropneumoniae JL03, an isolate of serotype 3 prevalent in China.</title>
        <authorList>
            <person name="Xu Z."/>
            <person name="Zhou Y."/>
            <person name="Li L."/>
            <person name="Zhou R."/>
            <person name="Xiao S."/>
            <person name="Wan Y."/>
            <person name="Zhang S."/>
            <person name="Wang K."/>
            <person name="Li W."/>
            <person name="Li L."/>
            <person name="Jin H."/>
            <person name="Kang M."/>
            <person name="Dalai B."/>
            <person name="Li T."/>
            <person name="Liu L."/>
            <person name="Cheng Y."/>
            <person name="Zhang L."/>
            <person name="Xu T."/>
            <person name="Zheng H."/>
            <person name="Pu S."/>
            <person name="Wang B."/>
            <person name="Gu W."/>
            <person name="Zhang X.L."/>
            <person name="Zhu G.-F."/>
            <person name="Wang S."/>
            <person name="Zhao G.-P."/>
            <person name="Chen H."/>
        </authorList>
    </citation>
    <scope>NUCLEOTIDE SEQUENCE [LARGE SCALE GENOMIC DNA]</scope>
    <source>
        <strain>JL03</strain>
    </source>
</reference>
<sequence>MKKLVILGSTGSIGKSTLSVVEQNKTEYEVFGLVGGKNVELMAAQCLLFQPKFAALDDENAAKALEEQLRQLNVKTEVLSGQKAICELSAHPEVDMVMAAIVGAAGLLPTLSAVKAGKKVLLANKESLVTCGQIFIDEARKSGAQLLPVDSEHNAIFQSLPPEAQQKVGFCPLAELGVSKIILTGSGGPFRVKPLDEFAAITPAQAVAHPNWSMGKKISVDSATMMNKGLEYIEARWLFNASAEEMEIIIHPQSIIHSMVRYIDGSVIAQMGNPDMCTPIAHTMAYPKRINAGVAPLDFFKLKELTFIEPDFARYPNLKLAIDAFAEGQYATTAMNAANEVAVEAFLNERIRFIDIVNVNRTVVENIAPVQVKEIADVLHIDKLARELAEQAVINL</sequence>
<dbReference type="EC" id="1.1.1.267" evidence="1"/>
<dbReference type="EMBL" id="CP000687">
    <property type="protein sequence ID" value="ABY69015.1"/>
    <property type="molecule type" value="Genomic_DNA"/>
</dbReference>
<dbReference type="SMR" id="B0BTR0"/>
<dbReference type="KEGG" id="apj:APJL_0428"/>
<dbReference type="HOGENOM" id="CLU_035714_0_1_6"/>
<dbReference type="UniPathway" id="UPA00056">
    <property type="reaction ID" value="UER00092"/>
</dbReference>
<dbReference type="Proteomes" id="UP000008547">
    <property type="component" value="Chromosome"/>
</dbReference>
<dbReference type="GO" id="GO:0030604">
    <property type="term" value="F:1-deoxy-D-xylulose-5-phosphate reductoisomerase activity"/>
    <property type="evidence" value="ECO:0007669"/>
    <property type="project" value="UniProtKB-UniRule"/>
</dbReference>
<dbReference type="GO" id="GO:0030145">
    <property type="term" value="F:manganese ion binding"/>
    <property type="evidence" value="ECO:0007669"/>
    <property type="project" value="TreeGrafter"/>
</dbReference>
<dbReference type="GO" id="GO:0070402">
    <property type="term" value="F:NADPH binding"/>
    <property type="evidence" value="ECO:0007669"/>
    <property type="project" value="InterPro"/>
</dbReference>
<dbReference type="GO" id="GO:0051484">
    <property type="term" value="P:isopentenyl diphosphate biosynthetic process, methylerythritol 4-phosphate pathway involved in terpenoid biosynthetic process"/>
    <property type="evidence" value="ECO:0007669"/>
    <property type="project" value="TreeGrafter"/>
</dbReference>
<dbReference type="FunFam" id="1.10.1740.10:FF:000004">
    <property type="entry name" value="1-deoxy-D-xylulose 5-phosphate reductoisomerase"/>
    <property type="match status" value="1"/>
</dbReference>
<dbReference type="FunFam" id="3.40.50.720:FF:000045">
    <property type="entry name" value="1-deoxy-D-xylulose 5-phosphate reductoisomerase"/>
    <property type="match status" value="1"/>
</dbReference>
<dbReference type="Gene3D" id="1.10.1740.10">
    <property type="match status" value="1"/>
</dbReference>
<dbReference type="Gene3D" id="3.40.50.720">
    <property type="entry name" value="NAD(P)-binding Rossmann-like Domain"/>
    <property type="match status" value="1"/>
</dbReference>
<dbReference type="HAMAP" id="MF_00183">
    <property type="entry name" value="DXP_reductoisom"/>
    <property type="match status" value="1"/>
</dbReference>
<dbReference type="InterPro" id="IPR003821">
    <property type="entry name" value="DXP_reductoisomerase"/>
</dbReference>
<dbReference type="InterPro" id="IPR013644">
    <property type="entry name" value="DXP_reductoisomerase_C"/>
</dbReference>
<dbReference type="InterPro" id="IPR013512">
    <property type="entry name" value="DXP_reductoisomerase_N"/>
</dbReference>
<dbReference type="InterPro" id="IPR026877">
    <property type="entry name" value="DXPR_C"/>
</dbReference>
<dbReference type="InterPro" id="IPR036169">
    <property type="entry name" value="DXPR_C_sf"/>
</dbReference>
<dbReference type="InterPro" id="IPR036291">
    <property type="entry name" value="NAD(P)-bd_dom_sf"/>
</dbReference>
<dbReference type="NCBIfam" id="TIGR00243">
    <property type="entry name" value="Dxr"/>
    <property type="match status" value="1"/>
</dbReference>
<dbReference type="NCBIfam" id="NF003938">
    <property type="entry name" value="PRK05447.1-1"/>
    <property type="match status" value="1"/>
</dbReference>
<dbReference type="NCBIfam" id="NF009114">
    <property type="entry name" value="PRK12464.1"/>
    <property type="match status" value="1"/>
</dbReference>
<dbReference type="PANTHER" id="PTHR30525">
    <property type="entry name" value="1-DEOXY-D-XYLULOSE 5-PHOSPHATE REDUCTOISOMERASE"/>
    <property type="match status" value="1"/>
</dbReference>
<dbReference type="PANTHER" id="PTHR30525:SF0">
    <property type="entry name" value="1-DEOXY-D-XYLULOSE 5-PHOSPHATE REDUCTOISOMERASE, CHLOROPLASTIC"/>
    <property type="match status" value="1"/>
</dbReference>
<dbReference type="Pfam" id="PF08436">
    <property type="entry name" value="DXP_redisom_C"/>
    <property type="match status" value="1"/>
</dbReference>
<dbReference type="Pfam" id="PF02670">
    <property type="entry name" value="DXP_reductoisom"/>
    <property type="match status" value="1"/>
</dbReference>
<dbReference type="Pfam" id="PF13288">
    <property type="entry name" value="DXPR_C"/>
    <property type="match status" value="1"/>
</dbReference>
<dbReference type="PIRSF" id="PIRSF006205">
    <property type="entry name" value="Dxp_reductismrs"/>
    <property type="match status" value="1"/>
</dbReference>
<dbReference type="SUPFAM" id="SSF69055">
    <property type="entry name" value="1-deoxy-D-xylulose-5-phosphate reductoisomerase, C-terminal domain"/>
    <property type="match status" value="1"/>
</dbReference>
<dbReference type="SUPFAM" id="SSF55347">
    <property type="entry name" value="Glyceraldehyde-3-phosphate dehydrogenase-like, C-terminal domain"/>
    <property type="match status" value="1"/>
</dbReference>
<dbReference type="SUPFAM" id="SSF51735">
    <property type="entry name" value="NAD(P)-binding Rossmann-fold domains"/>
    <property type="match status" value="1"/>
</dbReference>
<comment type="function">
    <text evidence="1">Catalyzes the NADPH-dependent rearrangement and reduction of 1-deoxy-D-xylulose-5-phosphate (DXP) to 2-C-methyl-D-erythritol 4-phosphate (MEP).</text>
</comment>
<comment type="catalytic activity">
    <reaction evidence="1">
        <text>2-C-methyl-D-erythritol 4-phosphate + NADP(+) = 1-deoxy-D-xylulose 5-phosphate + NADPH + H(+)</text>
        <dbReference type="Rhea" id="RHEA:13717"/>
        <dbReference type="ChEBI" id="CHEBI:15378"/>
        <dbReference type="ChEBI" id="CHEBI:57783"/>
        <dbReference type="ChEBI" id="CHEBI:57792"/>
        <dbReference type="ChEBI" id="CHEBI:58262"/>
        <dbReference type="ChEBI" id="CHEBI:58349"/>
        <dbReference type="EC" id="1.1.1.267"/>
    </reaction>
    <physiologicalReaction direction="right-to-left" evidence="1">
        <dbReference type="Rhea" id="RHEA:13719"/>
    </physiologicalReaction>
</comment>
<comment type="cofactor">
    <cofactor evidence="1">
        <name>Mg(2+)</name>
        <dbReference type="ChEBI" id="CHEBI:18420"/>
    </cofactor>
    <cofactor evidence="1">
        <name>Mn(2+)</name>
        <dbReference type="ChEBI" id="CHEBI:29035"/>
    </cofactor>
</comment>
<comment type="pathway">
    <text evidence="1">Isoprenoid biosynthesis; isopentenyl diphosphate biosynthesis via DXP pathway; isopentenyl diphosphate from 1-deoxy-D-xylulose 5-phosphate: step 1/6.</text>
</comment>
<comment type="similarity">
    <text evidence="1">Belongs to the DXR family.</text>
</comment>